<sequence>MAGHSQFKNIMHRKGRQDAVRSKMFSKLAREITVAAKQGLPDPAMNPRLRLAIQNAKAQSMPKDNIERAIKKAAGNDGENYDEVRYEGRGPGGVSVIVEALTDNRNRTASNVRAAFTKSGGSLGETGSVSFMFDRVGEIVYKPEAGDADKVMEAAIEAGAEDVQSGEDGHVILCAFEDIGEVSKALEAALGEAESIKTIWKPQTNTELDEEKARSVLKLLSVLEDDDDVQNVYTNFEVSDEVMEKLSA</sequence>
<feature type="chain" id="PRO_1000083145" description="Probable transcriptional regulatory protein BSUIS_B1192">
    <location>
        <begin position="1"/>
        <end position="248"/>
    </location>
</feature>
<comment type="subcellular location">
    <subcellularLocation>
        <location evidence="1">Cytoplasm</location>
    </subcellularLocation>
</comment>
<comment type="similarity">
    <text evidence="1">Belongs to the TACO1 family.</text>
</comment>
<gene>
    <name type="ordered locus">BSUIS_B1192</name>
</gene>
<dbReference type="EMBL" id="CP000912">
    <property type="protein sequence ID" value="ABY40129.1"/>
    <property type="molecule type" value="Genomic_DNA"/>
</dbReference>
<dbReference type="RefSeq" id="WP_002964805.1">
    <property type="nucleotide sequence ID" value="NC_010167.1"/>
</dbReference>
<dbReference type="SMR" id="A9WWJ3"/>
<dbReference type="KEGG" id="bmt:BSUIS_B1192"/>
<dbReference type="HOGENOM" id="CLU_062974_2_2_5"/>
<dbReference type="Proteomes" id="UP000008545">
    <property type="component" value="Chromosome II"/>
</dbReference>
<dbReference type="GO" id="GO:0005829">
    <property type="term" value="C:cytosol"/>
    <property type="evidence" value="ECO:0007669"/>
    <property type="project" value="TreeGrafter"/>
</dbReference>
<dbReference type="GO" id="GO:0003677">
    <property type="term" value="F:DNA binding"/>
    <property type="evidence" value="ECO:0007669"/>
    <property type="project" value="UniProtKB-UniRule"/>
</dbReference>
<dbReference type="GO" id="GO:0006355">
    <property type="term" value="P:regulation of DNA-templated transcription"/>
    <property type="evidence" value="ECO:0007669"/>
    <property type="project" value="UniProtKB-UniRule"/>
</dbReference>
<dbReference type="FunFam" id="1.10.10.200:FF:000002">
    <property type="entry name" value="Probable transcriptional regulatory protein CLM62_37755"/>
    <property type="match status" value="1"/>
</dbReference>
<dbReference type="Gene3D" id="1.10.10.200">
    <property type="match status" value="1"/>
</dbReference>
<dbReference type="Gene3D" id="3.30.70.980">
    <property type="match status" value="2"/>
</dbReference>
<dbReference type="HAMAP" id="MF_00693">
    <property type="entry name" value="Transcrip_reg_TACO1"/>
    <property type="match status" value="1"/>
</dbReference>
<dbReference type="InterPro" id="IPR017856">
    <property type="entry name" value="Integrase-like_N"/>
</dbReference>
<dbReference type="InterPro" id="IPR048300">
    <property type="entry name" value="TACO1_YebC-like_2nd/3rd_dom"/>
</dbReference>
<dbReference type="InterPro" id="IPR049083">
    <property type="entry name" value="TACO1_YebC_N"/>
</dbReference>
<dbReference type="InterPro" id="IPR002876">
    <property type="entry name" value="Transcrip_reg_TACO1-like"/>
</dbReference>
<dbReference type="InterPro" id="IPR026564">
    <property type="entry name" value="Transcrip_reg_TACO1-like_dom3"/>
</dbReference>
<dbReference type="InterPro" id="IPR029072">
    <property type="entry name" value="YebC-like"/>
</dbReference>
<dbReference type="NCBIfam" id="NF001030">
    <property type="entry name" value="PRK00110.1"/>
    <property type="match status" value="1"/>
</dbReference>
<dbReference type="NCBIfam" id="NF009044">
    <property type="entry name" value="PRK12378.1"/>
    <property type="match status" value="1"/>
</dbReference>
<dbReference type="NCBIfam" id="TIGR01033">
    <property type="entry name" value="YebC/PmpR family DNA-binding transcriptional regulator"/>
    <property type="match status" value="1"/>
</dbReference>
<dbReference type="PANTHER" id="PTHR12532:SF6">
    <property type="entry name" value="TRANSCRIPTIONAL REGULATORY PROTEIN YEBC-RELATED"/>
    <property type="match status" value="1"/>
</dbReference>
<dbReference type="PANTHER" id="PTHR12532">
    <property type="entry name" value="TRANSLATIONAL ACTIVATOR OF CYTOCHROME C OXIDASE 1"/>
    <property type="match status" value="1"/>
</dbReference>
<dbReference type="Pfam" id="PF20772">
    <property type="entry name" value="TACO1_YebC_N"/>
    <property type="match status" value="1"/>
</dbReference>
<dbReference type="Pfam" id="PF01709">
    <property type="entry name" value="Transcrip_reg"/>
    <property type="match status" value="1"/>
</dbReference>
<dbReference type="SUPFAM" id="SSF75625">
    <property type="entry name" value="YebC-like"/>
    <property type="match status" value="1"/>
</dbReference>
<evidence type="ECO:0000255" key="1">
    <source>
        <dbReference type="HAMAP-Rule" id="MF_00693"/>
    </source>
</evidence>
<accession>A9WWJ3</accession>
<reference key="1">
    <citation type="submission" date="2007-12" db="EMBL/GenBank/DDBJ databases">
        <title>Brucella suis ATCC 23445 whole genome shotgun sequencing project.</title>
        <authorList>
            <person name="Setubal J.C."/>
            <person name="Bowns C."/>
            <person name="Boyle S."/>
            <person name="Crasta O.R."/>
            <person name="Czar M.J."/>
            <person name="Dharmanolla C."/>
            <person name="Gillespie J.J."/>
            <person name="Kenyon R.W."/>
            <person name="Lu J."/>
            <person name="Mane S."/>
            <person name="Mohapatra S."/>
            <person name="Nagrani S."/>
            <person name="Purkayastha A."/>
            <person name="Rajasimha H.K."/>
            <person name="Shallom J.M."/>
            <person name="Shallom S."/>
            <person name="Shukla M."/>
            <person name="Snyder E.E."/>
            <person name="Sobral B.W."/>
            <person name="Wattam A.R."/>
            <person name="Will R."/>
            <person name="Williams K."/>
            <person name="Yoo H."/>
            <person name="Bruce D."/>
            <person name="Detter C."/>
            <person name="Munk C."/>
            <person name="Brettin T.S."/>
        </authorList>
    </citation>
    <scope>NUCLEOTIDE SEQUENCE [LARGE SCALE GENOMIC DNA]</scope>
    <source>
        <strain>ATCC 23445 / NCTC 10510</strain>
    </source>
</reference>
<name>Y3692_BRUSI</name>
<proteinExistence type="inferred from homology"/>
<keyword id="KW-0963">Cytoplasm</keyword>
<keyword id="KW-0238">DNA-binding</keyword>
<keyword id="KW-0804">Transcription</keyword>
<keyword id="KW-0805">Transcription regulation</keyword>
<organism>
    <name type="scientific">Brucella suis (strain ATCC 23445 / NCTC 10510)</name>
    <dbReference type="NCBI Taxonomy" id="470137"/>
    <lineage>
        <taxon>Bacteria</taxon>
        <taxon>Pseudomonadati</taxon>
        <taxon>Pseudomonadota</taxon>
        <taxon>Alphaproteobacteria</taxon>
        <taxon>Hyphomicrobiales</taxon>
        <taxon>Brucellaceae</taxon>
        <taxon>Brucella/Ochrobactrum group</taxon>
        <taxon>Brucella</taxon>
    </lineage>
</organism>
<protein>
    <recommendedName>
        <fullName evidence="1">Probable transcriptional regulatory protein BSUIS_B1192</fullName>
    </recommendedName>
</protein>